<reference key="1">
    <citation type="journal article" date="1994" name="Virology">
        <title>Two novel multigene families, 530 and 300, in the terminal variable regions of African swine fever virus genome.</title>
        <authorList>
            <person name="Yozawa T."/>
            <person name="Kutish G.F."/>
            <person name="Afonso C.L."/>
            <person name="Lu Z."/>
            <person name="Rock D.L."/>
        </authorList>
    </citation>
    <scope>NUCLEOTIDE SEQUENCE [GENOMIC DNA]</scope>
</reference>
<reference key="2">
    <citation type="submission" date="2003-03" db="EMBL/GenBank/DDBJ databases">
        <title>African swine fever virus genomes.</title>
        <authorList>
            <person name="Kutish G.F."/>
            <person name="Rock D.L."/>
        </authorList>
    </citation>
    <scope>NUCLEOTIDE SEQUENCE [LARGE SCALE GENOMIC DNA]</scope>
</reference>
<evidence type="ECO:0000250" key="1">
    <source>
        <dbReference type="UniProtKB" id="Q89702"/>
    </source>
</evidence>
<evidence type="ECO:0000305" key="2"/>
<proteinExistence type="inferred from homology"/>
<protein>
    <recommendedName>
        <fullName>Protein MGF 505-2R</fullName>
    </recommendedName>
</protein>
<feature type="chain" id="PRO_0000373319" description="Protein MGF 505-2R">
    <location>
        <begin position="1"/>
        <end position="524"/>
    </location>
</feature>
<gene>
    <name type="ordered locus">Mal-035</name>
</gene>
<organismHost>
    <name type="scientific">Ornithodoros</name>
    <name type="common">relapsing fever ticks</name>
    <dbReference type="NCBI Taxonomy" id="6937"/>
</organismHost>
<organismHost>
    <name type="scientific">Phacochoerus aethiopicus</name>
    <name type="common">Warthog</name>
    <dbReference type="NCBI Taxonomy" id="85517"/>
</organismHost>
<organismHost>
    <name type="scientific">Phacochoerus africanus</name>
    <name type="common">Warthog</name>
    <dbReference type="NCBI Taxonomy" id="41426"/>
</organismHost>
<organismHost>
    <name type="scientific">Potamochoerus larvatus</name>
    <name type="common">Bushpig</name>
    <dbReference type="NCBI Taxonomy" id="273792"/>
</organismHost>
<organismHost>
    <name type="scientific">Sus scrofa</name>
    <name type="common">Pig</name>
    <dbReference type="NCBI Taxonomy" id="9823"/>
</organismHost>
<dbReference type="EMBL" id="U03762">
    <property type="protein sequence ID" value="AAA50541.1"/>
    <property type="molecule type" value="Genomic_DNA"/>
</dbReference>
<dbReference type="EMBL" id="AY261361">
    <property type="status" value="NOT_ANNOTATED_CDS"/>
    <property type="molecule type" value="Genomic_DNA"/>
</dbReference>
<dbReference type="SMR" id="Q65128"/>
<dbReference type="Proteomes" id="UP000000860">
    <property type="component" value="Segment"/>
</dbReference>
<dbReference type="InterPro" id="IPR004858">
    <property type="entry name" value="MGF_505"/>
</dbReference>
<dbReference type="Pfam" id="PF03158">
    <property type="entry name" value="DUF249"/>
    <property type="match status" value="1"/>
</dbReference>
<name>5052R_ASFM2</name>
<accession>Q65128</accession>
<sequence>MFSLQDLCRKHLFILPDVFGEHVLQQLGLYWKRHGSLQRIGDDHILIRRDLILSTNEALKMAGEEGNNEVVKLLLLWEGNLHYAIIGALQGDQYDLIHKYENQIEDYHHILPLIQDAKTFEKCHALERFCDVPCLLEHATKHNMLPILQKYQEELSIRVYLRETLFELACLWQRYDVLKWIEQTMHVYDLKIMFNIAISKRDLSMYSLGYVLLFDRGNIEATFLTQHLEKTAAKGLLHFVLETLKYGGNLNIVLSQAVKYNHRKLLDYFLRQLPRKNIEKLLLLAVQEKASKKTLNLLLSHLNYSVKHIKKLLRYVIEYESTLVIKLLLKKRVNLIDAVLEKNVRYFSAIKVRTIMDELSISPERVIKMAIQKMRTDIVIQTSYIWEDDLERLIRLKNMVYTIKYEHGKKMLIKVIHGIYKNLLYGEKEKVMFHLAKLYVAQNAATQFRDICKDCCKLDVARFKPRFKQLILDCLEMVTKKSCFSIIEILENYIISLFVMKVITEEEKNLCLELLYKVISYKTI</sequence>
<organism>
    <name type="scientific">African swine fever virus (isolate Tick/Malawi/Lil 20-1/1983)</name>
    <name type="common">ASFV</name>
    <dbReference type="NCBI Taxonomy" id="10500"/>
    <lineage>
        <taxon>Viruses</taxon>
        <taxon>Varidnaviria</taxon>
        <taxon>Bamfordvirae</taxon>
        <taxon>Nucleocytoviricota</taxon>
        <taxon>Pokkesviricetes</taxon>
        <taxon>Asfuvirales</taxon>
        <taxon>Asfarviridae</taxon>
        <taxon>Asfivirus</taxon>
        <taxon>African swine fever virus</taxon>
    </lineage>
</organism>
<comment type="function">
    <text evidence="1">Plays a role in virus cell tropism, and may be required for efficient virus replication in macrophages.</text>
</comment>
<comment type="induction">
    <text evidence="2">Expressed in the late phase of the viral replicative cycle.</text>
</comment>
<comment type="similarity">
    <text evidence="2">Belongs to the asfivirus MGF 505 family.</text>
</comment>
<keyword id="KW-0426">Late protein</keyword>